<feature type="chain" id="PRO_1000014142" description="Small ribosomal subunit protein uS7">
    <location>
        <begin position="1"/>
        <end position="156"/>
    </location>
</feature>
<keyword id="KW-1185">Reference proteome</keyword>
<keyword id="KW-0687">Ribonucleoprotein</keyword>
<keyword id="KW-0689">Ribosomal protein</keyword>
<keyword id="KW-0694">RNA-binding</keyword>
<keyword id="KW-0699">rRNA-binding</keyword>
<keyword id="KW-0820">tRNA-binding</keyword>
<evidence type="ECO:0000255" key="1">
    <source>
        <dbReference type="HAMAP-Rule" id="MF_00480"/>
    </source>
</evidence>
<evidence type="ECO:0000305" key="2"/>
<dbReference type="EMBL" id="CP000769">
    <property type="protein sequence ID" value="ABS26111.1"/>
    <property type="molecule type" value="Genomic_DNA"/>
</dbReference>
<dbReference type="RefSeq" id="WP_012096690.1">
    <property type="nucleotide sequence ID" value="NC_009675.1"/>
</dbReference>
<dbReference type="SMR" id="A7HBL5"/>
<dbReference type="STRING" id="404589.Anae109_1908"/>
<dbReference type="KEGG" id="afw:Anae109_1908"/>
<dbReference type="eggNOG" id="COG0049">
    <property type="taxonomic scope" value="Bacteria"/>
</dbReference>
<dbReference type="HOGENOM" id="CLU_072226_1_1_7"/>
<dbReference type="OrthoDB" id="9807653at2"/>
<dbReference type="Proteomes" id="UP000006382">
    <property type="component" value="Chromosome"/>
</dbReference>
<dbReference type="GO" id="GO:0015935">
    <property type="term" value="C:small ribosomal subunit"/>
    <property type="evidence" value="ECO:0007669"/>
    <property type="project" value="InterPro"/>
</dbReference>
<dbReference type="GO" id="GO:0019843">
    <property type="term" value="F:rRNA binding"/>
    <property type="evidence" value="ECO:0007669"/>
    <property type="project" value="UniProtKB-UniRule"/>
</dbReference>
<dbReference type="GO" id="GO:0003735">
    <property type="term" value="F:structural constituent of ribosome"/>
    <property type="evidence" value="ECO:0007669"/>
    <property type="project" value="InterPro"/>
</dbReference>
<dbReference type="GO" id="GO:0000049">
    <property type="term" value="F:tRNA binding"/>
    <property type="evidence" value="ECO:0007669"/>
    <property type="project" value="UniProtKB-UniRule"/>
</dbReference>
<dbReference type="GO" id="GO:0006412">
    <property type="term" value="P:translation"/>
    <property type="evidence" value="ECO:0007669"/>
    <property type="project" value="UniProtKB-UniRule"/>
</dbReference>
<dbReference type="CDD" id="cd14869">
    <property type="entry name" value="uS7_Bacteria"/>
    <property type="match status" value="1"/>
</dbReference>
<dbReference type="FunFam" id="1.10.455.10:FF:000001">
    <property type="entry name" value="30S ribosomal protein S7"/>
    <property type="match status" value="1"/>
</dbReference>
<dbReference type="Gene3D" id="1.10.455.10">
    <property type="entry name" value="Ribosomal protein S7 domain"/>
    <property type="match status" value="1"/>
</dbReference>
<dbReference type="HAMAP" id="MF_00480_B">
    <property type="entry name" value="Ribosomal_uS7_B"/>
    <property type="match status" value="1"/>
</dbReference>
<dbReference type="InterPro" id="IPR000235">
    <property type="entry name" value="Ribosomal_uS7"/>
</dbReference>
<dbReference type="InterPro" id="IPR005717">
    <property type="entry name" value="Ribosomal_uS7_bac/org-type"/>
</dbReference>
<dbReference type="InterPro" id="IPR020606">
    <property type="entry name" value="Ribosomal_uS7_CS"/>
</dbReference>
<dbReference type="InterPro" id="IPR023798">
    <property type="entry name" value="Ribosomal_uS7_dom"/>
</dbReference>
<dbReference type="InterPro" id="IPR036823">
    <property type="entry name" value="Ribosomal_uS7_dom_sf"/>
</dbReference>
<dbReference type="NCBIfam" id="TIGR01029">
    <property type="entry name" value="rpsG_bact"/>
    <property type="match status" value="1"/>
</dbReference>
<dbReference type="PANTHER" id="PTHR11205">
    <property type="entry name" value="RIBOSOMAL PROTEIN S7"/>
    <property type="match status" value="1"/>
</dbReference>
<dbReference type="Pfam" id="PF00177">
    <property type="entry name" value="Ribosomal_S7"/>
    <property type="match status" value="1"/>
</dbReference>
<dbReference type="PIRSF" id="PIRSF002122">
    <property type="entry name" value="RPS7p_RPS7a_RPS5e_RPS7o"/>
    <property type="match status" value="1"/>
</dbReference>
<dbReference type="SUPFAM" id="SSF47973">
    <property type="entry name" value="Ribosomal protein S7"/>
    <property type="match status" value="1"/>
</dbReference>
<dbReference type="PROSITE" id="PS00052">
    <property type="entry name" value="RIBOSOMAL_S7"/>
    <property type="match status" value="1"/>
</dbReference>
<protein>
    <recommendedName>
        <fullName evidence="1">Small ribosomal subunit protein uS7</fullName>
    </recommendedName>
    <alternativeName>
        <fullName evidence="2">30S ribosomal protein S7</fullName>
    </alternativeName>
</protein>
<proteinExistence type="inferred from homology"/>
<reference key="1">
    <citation type="journal article" date="2015" name="Genome Announc.">
        <title>Complete genome sequence of Anaeromyxobacter sp. Fw109-5, an anaerobic, metal-reducing bacterium isolated from a contaminated subsurface environment.</title>
        <authorList>
            <person name="Hwang C."/>
            <person name="Copeland A."/>
            <person name="Lucas S."/>
            <person name="Lapidus A."/>
            <person name="Barry K."/>
            <person name="Glavina Del Rio T."/>
            <person name="Dalin E."/>
            <person name="Tice H."/>
            <person name="Pitluck S."/>
            <person name="Sims D."/>
            <person name="Brettin T."/>
            <person name="Bruce D.C."/>
            <person name="Detter J.C."/>
            <person name="Han C.S."/>
            <person name="Schmutz J."/>
            <person name="Larimer F.W."/>
            <person name="Land M.L."/>
            <person name="Hauser L.J."/>
            <person name="Kyrpides N."/>
            <person name="Lykidis A."/>
            <person name="Richardson P."/>
            <person name="Belieav A."/>
            <person name="Sanford R.A."/>
            <person name="Loeffler F.E."/>
            <person name="Fields M.W."/>
        </authorList>
    </citation>
    <scope>NUCLEOTIDE SEQUENCE [LARGE SCALE GENOMIC DNA]</scope>
    <source>
        <strain>Fw109-5</strain>
    </source>
</reference>
<comment type="function">
    <text evidence="1">One of the primary rRNA binding proteins, it binds directly to 16S rRNA where it nucleates assembly of the head domain of the 30S subunit. Is located at the subunit interface close to the decoding center, probably blocks exit of the E-site tRNA.</text>
</comment>
<comment type="subunit">
    <text evidence="1">Part of the 30S ribosomal subunit. Contacts proteins S9 and S11.</text>
</comment>
<comment type="similarity">
    <text evidence="1">Belongs to the universal ribosomal protein uS7 family.</text>
</comment>
<sequence length="156" mass="18167">MPRRREVEKRKILPDPKFQDRIVAKFVNNLMREGKKSTGERIIYGAFDQVEQKLKDDPLKIFKKALDNVKPVVEVKSRRVGGATYQVPVEVRQDRRTALAMRWLIDYSKARGEKTMQEKLAGEIIDAANNRGNAVKKREDTHKMAEANKAFAHYRW</sequence>
<accession>A7HBL5</accession>
<name>RS7_ANADF</name>
<gene>
    <name evidence="1" type="primary">rpsG</name>
    <name type="ordered locus">Anae109_1908</name>
</gene>
<organism>
    <name type="scientific">Anaeromyxobacter sp. (strain Fw109-5)</name>
    <dbReference type="NCBI Taxonomy" id="404589"/>
    <lineage>
        <taxon>Bacteria</taxon>
        <taxon>Pseudomonadati</taxon>
        <taxon>Myxococcota</taxon>
        <taxon>Myxococcia</taxon>
        <taxon>Myxococcales</taxon>
        <taxon>Cystobacterineae</taxon>
        <taxon>Anaeromyxobacteraceae</taxon>
        <taxon>Anaeromyxobacter</taxon>
    </lineage>
</organism>